<protein>
    <recommendedName>
        <fullName>Protein P1</fullName>
    </recommendedName>
    <alternativeName>
        <fullName>66.2 kDa protein</fullName>
    </alternativeName>
    <alternativeName>
        <fullName>Genome-linked protein precursor</fullName>
    </alternativeName>
    <alternativeName>
        <fullName>Protein ORF1</fullName>
    </alternativeName>
    <component>
        <recommendedName>
            <fullName>Serine protease</fullName>
            <ecNumber>3.4.21.-</ecNumber>
        </recommendedName>
    </component>
    <component>
        <recommendedName>
            <fullName>VPg/P1-C25</fullName>
        </recommendedName>
    </component>
</protein>
<evidence type="ECO:0000250" key="1"/>
<evidence type="ECO:0000255" key="2"/>
<evidence type="ECO:0000255" key="3">
    <source>
        <dbReference type="PROSITE-ProRule" id="PRU01216"/>
    </source>
</evidence>
<evidence type="ECO:0000256" key="4">
    <source>
        <dbReference type="SAM" id="MobiDB-lite"/>
    </source>
</evidence>
<evidence type="ECO:0000305" key="5"/>
<reference key="1">
    <citation type="journal article" date="1988" name="Nucleic Acids Res.">
        <title>Nucleotide sequence of beet western yellows virus RNA.</title>
        <authorList>
            <person name="Veidt I."/>
            <person name="Lot H."/>
            <person name="Leiser M."/>
            <person name="Scheidecker D."/>
            <person name="Guilley H."/>
            <person name="Richards K.E."/>
            <person name="Jonard G."/>
        </authorList>
    </citation>
    <scope>NUCLEOTIDE SEQUENCE [GENOMIC RNA]</scope>
</reference>
<proteinExistence type="inferred from homology"/>
<sequence length="607" mass="66211">MYSKLMFFFALCSISFLFTSEAASTMLLESSYLPLNQSYAPGFLYKRDMLPPPLQAVLTYTCPEPRPLAEESYNDLLRAISQKSSSDFQNAYSLALSFSSDFYQHGLKTLKDVSFLAVEKFLWGLTRLWSSLILASFSALWWLVSNFTTPVFCLALLYTVTKYMVKTVSFLFGGLPIWIISIAFSLLKKSFSALRSTPKCLYEKAIDGFKSFTIPQSPPKSCVIPITHASGNHAGYASCIKLYNGENALMTATHVLRDCPNAVAVSAKGLKTRIPLAEFKTIAKSDKGDVTLLRGPPNWEGLLGCKAANVITAANLAKCKASIYSFDRDGWVSSYAEIVGSEGTDVMVLSHTEGGHSGSPYFNGKTILGVHSGASATGNYNLMAPIPSLPGLTSPTYVFETTAPQGRVFAQEDIAEIEGLYAQVMKRVQQAEDFKPKTGKYWGDMEDDEDIFFESKEDLSGNGVRGTVRGTNGEGSSTPKTSNVDGKEMMEKIISSLVGKINLENIERKVIEEISAKAMKTPKSRRRRAPKKQPESSKDTSPRSTTGKYQPPHVRSPASVTAANCPNTTTPSKKKNLAGGRPSSGTIPRWVRKQAASAGPSSAPKQN</sequence>
<keyword id="KW-0378">Hydrolase</keyword>
<keyword id="KW-0472">Membrane</keyword>
<keyword id="KW-0645">Protease</keyword>
<keyword id="KW-1185">Reference proteome</keyword>
<keyword id="KW-0688">Ribosomal frameshifting</keyword>
<keyword id="KW-0694">RNA-binding</keyword>
<keyword id="KW-0720">Serine protease</keyword>
<keyword id="KW-0732">Signal</keyword>
<keyword id="KW-0812">Transmembrane</keyword>
<keyword id="KW-1133">Transmembrane helix</keyword>
<feature type="signal peptide" evidence="2">
    <location>
        <begin position="1"/>
        <end position="22"/>
    </location>
</feature>
<feature type="chain" id="PRO_0000222395" description="Protein P1">
    <location>
        <begin position="23"/>
        <end position="607"/>
    </location>
</feature>
<feature type="chain" id="PRO_0000390897" description="Serine protease" evidence="2">
    <location>
        <begin position="204"/>
        <end position="400"/>
    </location>
</feature>
<feature type="chain" id="PRO_0000390898" description="VPg/P1-C25" evidence="2">
    <location>
        <begin position="401"/>
        <end position="607"/>
    </location>
</feature>
<feature type="transmembrane region" description="Helical" evidence="2">
    <location>
        <begin position="115"/>
        <end position="135"/>
    </location>
</feature>
<feature type="transmembrane region" description="Helical" evidence="2">
    <location>
        <begin position="137"/>
        <end position="157"/>
    </location>
</feature>
<feature type="transmembrane region" description="Helical" evidence="2">
    <location>
        <begin position="167"/>
        <end position="187"/>
    </location>
</feature>
<feature type="domain" description="Peptidase S39" evidence="3">
    <location>
        <begin position="206"/>
        <end position="400"/>
    </location>
</feature>
<feature type="region of interest" description="Disordered" evidence="4">
    <location>
        <begin position="457"/>
        <end position="485"/>
    </location>
</feature>
<feature type="region of interest" description="Disordered" evidence="4">
    <location>
        <begin position="517"/>
        <end position="607"/>
    </location>
</feature>
<feature type="compositionally biased region" description="Polar residues" evidence="4">
    <location>
        <begin position="474"/>
        <end position="484"/>
    </location>
</feature>
<feature type="compositionally biased region" description="Basic residues" evidence="4">
    <location>
        <begin position="520"/>
        <end position="531"/>
    </location>
</feature>
<feature type="compositionally biased region" description="Basic and acidic residues" evidence="4">
    <location>
        <begin position="532"/>
        <end position="541"/>
    </location>
</feature>
<feature type="compositionally biased region" description="Polar residues" evidence="4">
    <location>
        <begin position="558"/>
        <end position="571"/>
    </location>
</feature>
<feature type="active site" description="For protease activity" evidence="3">
    <location>
        <position position="254"/>
    </location>
</feature>
<feature type="active site" description="For protease activity" evidence="3">
    <location>
        <position position="289"/>
    </location>
</feature>
<feature type="active site" description="For protease activity" evidence="3">
    <location>
        <position position="357"/>
    </location>
</feature>
<feature type="site" description="Cleavage; by viral serine protease" evidence="2">
    <location>
        <begin position="203"/>
        <end position="204"/>
    </location>
</feature>
<feature type="site" description="Cleavage; by viral serine protease" evidence="1">
    <location>
        <begin position="400"/>
        <end position="401"/>
    </location>
</feature>
<name>P1_TYYVF</name>
<comment type="function">
    <text evidence="1">Precursor from which the VPg molecule is probably released at the onset of the RNA synthesis. Essential for virus replication (By similarity).</text>
</comment>
<comment type="subcellular location">
    <molecule>Protein P1</molecule>
    <subcellularLocation>
        <location evidence="5">Membrane</location>
        <topology evidence="5">Multi-pass membrane protein</topology>
    </subcellularLocation>
</comment>
<comment type="alternative products">
    <event type="ribosomal frameshifting"/>
    <isoform>
        <id>P09506-1</id>
        <name>Protein P1</name>
        <sequence type="displayed"/>
    </isoform>
    <isoform>
        <id>P09507-1</id>
        <name>RNA-directed RNA polymerase</name>
        <sequence type="external"/>
    </isoform>
</comment>
<comment type="domain">
    <text evidence="1">The C-terminus part of protein P1 and VPg/P1-C25 displays RNA-binding properties.</text>
</comment>
<comment type="PTM">
    <text evidence="1">Specific enzymatic cleavages in vivo yield mature proteins. The protease probably cleaves itself and releases the VPg protein (By similarity).</text>
</comment>
<comment type="miscellaneous">
    <molecule>Isoform Protein P1</molecule>
    <text>Produced by conventional translation.</text>
</comment>
<comment type="similarity">
    <text evidence="5">Belongs to the peptidase S39B family.</text>
</comment>
<organism>
    <name type="scientific">Turnip yellows virus (isolate FL-1)</name>
    <name type="common">TuYV</name>
    <name type="synonym">BWYV-FL1</name>
    <dbReference type="NCBI Taxonomy" id="12043"/>
    <lineage>
        <taxon>Viruses</taxon>
        <taxon>Riboviria</taxon>
        <taxon>Orthornavirae</taxon>
        <taxon>Pisuviricota</taxon>
        <taxon>Pisoniviricetes</taxon>
        <taxon>Sobelivirales</taxon>
        <taxon>Solemoviridae</taxon>
        <taxon>Polerovirus</taxon>
        <taxon>Beet western yellows virus</taxon>
    </lineage>
</organism>
<gene>
    <name type="ORF">ORF1</name>
</gene>
<organismHost>
    <name type="scientific">Beta vulgaris</name>
    <name type="common">Sugar beet</name>
    <dbReference type="NCBI Taxonomy" id="161934"/>
</organismHost>
<organismHost>
    <name type="scientific">Brassica napus subsp. rapifera</name>
    <dbReference type="NCBI Taxonomy" id="3709"/>
</organismHost>
<organismHost>
    <name type="scientific">Brassica napus var. napus</name>
    <dbReference type="NCBI Taxonomy" id="138011"/>
</organismHost>
<organismHost>
    <name type="scientific">Brassica nigra</name>
    <name type="common">Black mustard</name>
    <name type="synonym">Sinapis nigra</name>
    <dbReference type="NCBI Taxonomy" id="3710"/>
</organismHost>
<organismHost>
    <name type="scientific">Brassica oleracea var. botrytis</name>
    <name type="common">Cauliflower</name>
    <dbReference type="NCBI Taxonomy" id="3715"/>
</organismHost>
<organismHost>
    <name type="scientific">Brassica oleracea var. capitata</name>
    <name type="common">Cabbage</name>
    <dbReference type="NCBI Taxonomy" id="3716"/>
</organismHost>
<organismHost>
    <name type="scientific">Brassica rapa subsp. rapa</name>
    <name type="common">Turnip</name>
    <dbReference type="NCBI Taxonomy" id="51350"/>
</organismHost>
<organismHost>
    <name type="scientific">Capsicum annuum</name>
    <name type="common">Capsicum pepper</name>
    <dbReference type="NCBI Taxonomy" id="4072"/>
</organismHost>
<organismHost>
    <name type="scientific">Cicer arietinum</name>
    <name type="common">Chickpea</name>
    <name type="synonym">Garbanzo</name>
    <dbReference type="NCBI Taxonomy" id="3827"/>
</organismHost>
<organismHost>
    <name type="scientific">Citrullus lanatus</name>
    <name type="common">Watermelon</name>
    <name type="synonym">Citrullus vulgaris</name>
    <dbReference type="NCBI Taxonomy" id="3654"/>
</organismHost>
<organismHost>
    <name type="scientific">Crambe hispanica subsp. abyssinica</name>
    <name type="common">Abyssinian kale</name>
    <name type="synonym">Crambe abyssinica</name>
    <dbReference type="NCBI Taxonomy" id="3721"/>
</organismHost>
<organismHost>
    <name type="scientific">Cucumis sativus</name>
    <name type="common">Cucumber</name>
    <dbReference type="NCBI Taxonomy" id="3659"/>
</organismHost>
<organismHost>
    <name type="scientific">Cucurbita pepo</name>
    <name type="common">Vegetable marrow</name>
    <name type="synonym">Summer squash</name>
    <dbReference type="NCBI Taxonomy" id="3663"/>
</organismHost>
<organismHost>
    <name type="scientific">Glycine max</name>
    <name type="common">Soybean</name>
    <name type="synonym">Glycine hispida</name>
    <dbReference type="NCBI Taxonomy" id="3847"/>
</organismHost>
<organismHost>
    <name type="scientific">Helianthus annuus</name>
    <name type="common">Common sunflower</name>
    <dbReference type="NCBI Taxonomy" id="4232"/>
</organismHost>
<organismHost>
    <name type="scientific">Lactuca sativa</name>
    <name type="common">Garden lettuce</name>
    <dbReference type="NCBI Taxonomy" id="4236"/>
</organismHost>
<organismHost>
    <name type="scientific">Phlox drummondii</name>
    <name type="common">Annual phlox</name>
    <dbReference type="NCBI Taxonomy" id="103529"/>
</organismHost>
<organismHost>
    <name type="scientific">Pisum sativum</name>
    <name type="common">Garden pea</name>
    <name type="synonym">Lathyrus oleraceus</name>
    <dbReference type="NCBI Taxonomy" id="3888"/>
</organismHost>
<organismHost>
    <name type="scientific">Raphanus sativus</name>
    <name type="common">Radish</name>
    <name type="synonym">Raphanus raphanistrum var. sativus</name>
    <dbReference type="NCBI Taxonomy" id="3726"/>
</organismHost>
<organismHost>
    <name type="scientific">Solanum lycopersicum</name>
    <name type="common">Tomato</name>
    <name type="synonym">Lycopersicon esculentum</name>
    <dbReference type="NCBI Taxonomy" id="4081"/>
</organismHost>
<organismHost>
    <name type="scientific">Spinacia oleracea</name>
    <name type="common">Spinach</name>
    <dbReference type="NCBI Taxonomy" id="3562"/>
</organismHost>
<organismHost>
    <name type="scientific">Trifolium subterraneum</name>
    <name type="common">Subterranean clover</name>
    <dbReference type="NCBI Taxonomy" id="3900"/>
</organismHost>
<organismHost>
    <name type="scientific">Vicia faba</name>
    <name type="common">Broad bean</name>
    <name type="synonym">Faba vulgaris</name>
    <dbReference type="NCBI Taxonomy" id="3906"/>
</organismHost>
<dbReference type="EC" id="3.4.21.-"/>
<dbReference type="EMBL" id="X13063">
    <property type="protein sequence ID" value="CAA31463.1"/>
    <property type="molecule type" value="Genomic_RNA"/>
</dbReference>
<dbReference type="PIR" id="S01939">
    <property type="entry name" value="S01939"/>
</dbReference>
<dbReference type="RefSeq" id="NP_620486.1">
    <property type="nucleotide sequence ID" value="NC_003743.1"/>
</dbReference>
<dbReference type="SMR" id="P09506"/>
<dbReference type="MEROPS" id="S39.002"/>
<dbReference type="KEGG" id="vg:940483"/>
<dbReference type="Proteomes" id="UP000007545">
    <property type="component" value="Segment"/>
</dbReference>
<dbReference type="GO" id="GO:0016020">
    <property type="term" value="C:membrane"/>
    <property type="evidence" value="ECO:0007669"/>
    <property type="project" value="UniProtKB-SubCell"/>
</dbReference>
<dbReference type="GO" id="GO:0003723">
    <property type="term" value="F:RNA binding"/>
    <property type="evidence" value="ECO:0007669"/>
    <property type="project" value="UniProtKB-KW"/>
</dbReference>
<dbReference type="GO" id="GO:0004252">
    <property type="term" value="F:serine-type endopeptidase activity"/>
    <property type="evidence" value="ECO:0007669"/>
    <property type="project" value="InterPro"/>
</dbReference>
<dbReference type="GO" id="GO:0070008">
    <property type="term" value="F:serine-type exopeptidase activity"/>
    <property type="evidence" value="ECO:0007669"/>
    <property type="project" value="InterPro"/>
</dbReference>
<dbReference type="GO" id="GO:0006508">
    <property type="term" value="P:proteolysis"/>
    <property type="evidence" value="ECO:0007669"/>
    <property type="project" value="UniProtKB-KW"/>
</dbReference>
<dbReference type="GO" id="GO:0075523">
    <property type="term" value="P:viral translational frameshifting"/>
    <property type="evidence" value="ECO:0007669"/>
    <property type="project" value="UniProtKB-KW"/>
</dbReference>
<dbReference type="Gene3D" id="2.40.10.10">
    <property type="entry name" value="Trypsin-like serine proteases"/>
    <property type="match status" value="2"/>
</dbReference>
<dbReference type="InterPro" id="IPR018019">
    <property type="entry name" value="Luteovirus_Orf2"/>
</dbReference>
<dbReference type="InterPro" id="IPR009003">
    <property type="entry name" value="Peptidase_S1_PA"/>
</dbReference>
<dbReference type="InterPro" id="IPR043504">
    <property type="entry name" value="Peptidase_S1_PA_chymotrypsin"/>
</dbReference>
<dbReference type="InterPro" id="IPR000382">
    <property type="entry name" value="Peptidase_S39B_luteovirus"/>
</dbReference>
<dbReference type="Pfam" id="PF02122">
    <property type="entry name" value="Peptidase_S39"/>
    <property type="match status" value="1"/>
</dbReference>
<dbReference type="PRINTS" id="PR00913">
    <property type="entry name" value="LVIRUSORF2"/>
</dbReference>
<dbReference type="SUPFAM" id="SSF50494">
    <property type="entry name" value="Trypsin-like serine proteases"/>
    <property type="match status" value="1"/>
</dbReference>
<dbReference type="PROSITE" id="PS51868">
    <property type="entry name" value="PEPTIDASE_S39"/>
    <property type="match status" value="1"/>
</dbReference>
<accession>P09506</accession>